<evidence type="ECO:0000255" key="1">
    <source>
        <dbReference type="HAMAP-Rule" id="MF_00607"/>
    </source>
</evidence>
<organism>
    <name type="scientific">Staphylococcus aureus (strain MW2)</name>
    <dbReference type="NCBI Taxonomy" id="196620"/>
    <lineage>
        <taxon>Bacteria</taxon>
        <taxon>Bacillati</taxon>
        <taxon>Bacillota</taxon>
        <taxon>Bacilli</taxon>
        <taxon>Bacillales</taxon>
        <taxon>Staphylococcaceae</taxon>
        <taxon>Staphylococcus</taxon>
    </lineage>
</organism>
<proteinExistence type="inferred from homology"/>
<comment type="function">
    <text evidence="1">Specifically dimethylates two adjacent adenosines (A1518 and A1519) in the loop of a conserved hairpin near the 3'-end of 16S rRNA in the 30S particle. May play a critical role in biogenesis of 30S subunits.</text>
</comment>
<comment type="catalytic activity">
    <reaction evidence="1">
        <text>adenosine(1518)/adenosine(1519) in 16S rRNA + 4 S-adenosyl-L-methionine = N(6)-dimethyladenosine(1518)/N(6)-dimethyladenosine(1519) in 16S rRNA + 4 S-adenosyl-L-homocysteine + 4 H(+)</text>
        <dbReference type="Rhea" id="RHEA:19609"/>
        <dbReference type="Rhea" id="RHEA-COMP:10232"/>
        <dbReference type="Rhea" id="RHEA-COMP:10233"/>
        <dbReference type="ChEBI" id="CHEBI:15378"/>
        <dbReference type="ChEBI" id="CHEBI:57856"/>
        <dbReference type="ChEBI" id="CHEBI:59789"/>
        <dbReference type="ChEBI" id="CHEBI:74411"/>
        <dbReference type="ChEBI" id="CHEBI:74493"/>
        <dbReference type="EC" id="2.1.1.182"/>
    </reaction>
</comment>
<comment type="subcellular location">
    <subcellularLocation>
        <location evidence="1">Cytoplasm</location>
    </subcellularLocation>
</comment>
<comment type="similarity">
    <text evidence="1">Belongs to the class I-like SAM-binding methyltransferase superfamily. rRNA adenine N(6)-methyltransferase family. RsmA subfamily.</text>
</comment>
<reference key="1">
    <citation type="journal article" date="2002" name="Lancet">
        <title>Genome and virulence determinants of high virulence community-acquired MRSA.</title>
        <authorList>
            <person name="Baba T."/>
            <person name="Takeuchi F."/>
            <person name="Kuroda M."/>
            <person name="Yuzawa H."/>
            <person name="Aoki K."/>
            <person name="Oguchi A."/>
            <person name="Nagai Y."/>
            <person name="Iwama N."/>
            <person name="Asano K."/>
            <person name="Naimi T."/>
            <person name="Kuroda H."/>
            <person name="Cui L."/>
            <person name="Yamamoto K."/>
            <person name="Hiramatsu K."/>
        </authorList>
    </citation>
    <scope>NUCLEOTIDE SEQUENCE [LARGE SCALE GENOMIC DNA]</scope>
    <source>
        <strain>MW2</strain>
    </source>
</reference>
<name>RSMA_STAAW</name>
<keyword id="KW-0963">Cytoplasm</keyword>
<keyword id="KW-0489">Methyltransferase</keyword>
<keyword id="KW-0694">RNA-binding</keyword>
<keyword id="KW-0698">rRNA processing</keyword>
<keyword id="KW-0949">S-adenosyl-L-methionine</keyword>
<keyword id="KW-0808">Transferase</keyword>
<feature type="chain" id="PRO_0000101608" description="Ribosomal RNA small subunit methyltransferase A">
    <location>
        <begin position="1"/>
        <end position="297"/>
    </location>
</feature>
<feature type="binding site" evidence="1">
    <location>
        <position position="31"/>
    </location>
    <ligand>
        <name>S-adenosyl-L-methionine</name>
        <dbReference type="ChEBI" id="CHEBI:59789"/>
    </ligand>
</feature>
<feature type="binding site" evidence="1">
    <location>
        <position position="33"/>
    </location>
    <ligand>
        <name>S-adenosyl-L-methionine</name>
        <dbReference type="ChEBI" id="CHEBI:59789"/>
    </ligand>
</feature>
<feature type="binding site" evidence="1">
    <location>
        <position position="58"/>
    </location>
    <ligand>
        <name>S-adenosyl-L-methionine</name>
        <dbReference type="ChEBI" id="CHEBI:59789"/>
    </ligand>
</feature>
<feature type="binding site" evidence="1">
    <location>
        <position position="79"/>
    </location>
    <ligand>
        <name>S-adenosyl-L-methionine</name>
        <dbReference type="ChEBI" id="CHEBI:59789"/>
    </ligand>
</feature>
<feature type="binding site" evidence="1">
    <location>
        <position position="104"/>
    </location>
    <ligand>
        <name>S-adenosyl-L-methionine</name>
        <dbReference type="ChEBI" id="CHEBI:59789"/>
    </ligand>
</feature>
<feature type="binding site" evidence="1">
    <location>
        <position position="129"/>
    </location>
    <ligand>
        <name>S-adenosyl-L-methionine</name>
        <dbReference type="ChEBI" id="CHEBI:59789"/>
    </ligand>
</feature>
<sequence>MLDNKDIATPSRTRALLDKYGFNFKKSLGQNFLIDVNIINNIIDASDIDAQTGVIEIGPGMGSLTEQLARHAKRVLAFEIDQRLIPVLNDTLSPYDNVTVINEDILKANIKEAVENHLQDCEKIMVVANLPYYITTPILLNLMQQDIPIDGYVVMMQKEVGERLNAEVGSKAYGSLSIVVQYYTETSKVLTVPKSVFMPPPNVDSIVVKLMQRTEPLVTVDNEEAFFKLAKAAFAQRRKTINNNYQNYFKDGKQHKEVILQWLEQAGIDPRRRGETLSIQDFAKLYEEKKKFPQLEN</sequence>
<accession>P66663</accession>
<accession>Q99WB0</accession>
<gene>
    <name evidence="1" type="primary">rsmA</name>
    <name evidence="1" type="synonym">ksgA</name>
    <name type="ordered locus">MW0448</name>
</gene>
<protein>
    <recommendedName>
        <fullName evidence="1">Ribosomal RNA small subunit methyltransferase A</fullName>
        <ecNumber evidence="1">2.1.1.182</ecNumber>
    </recommendedName>
    <alternativeName>
        <fullName evidence="1">16S rRNA (adenine(1518)-N(6)/adenine(1519)-N(6))-dimethyltransferase</fullName>
    </alternativeName>
    <alternativeName>
        <fullName evidence="1">16S rRNA dimethyladenosine transferase</fullName>
    </alternativeName>
    <alternativeName>
        <fullName evidence="1">16S rRNA dimethylase</fullName>
    </alternativeName>
    <alternativeName>
        <fullName evidence="1">S-adenosylmethionine-6-N', N'-adenosyl(rRNA) dimethyltransferase</fullName>
    </alternativeName>
</protein>
<dbReference type="EC" id="2.1.1.182" evidence="1"/>
<dbReference type="EMBL" id="BA000033">
    <property type="protein sequence ID" value="BAB94313.1"/>
    <property type="molecule type" value="Genomic_DNA"/>
</dbReference>
<dbReference type="RefSeq" id="WP_000886500.1">
    <property type="nucleotide sequence ID" value="NC_003923.1"/>
</dbReference>
<dbReference type="SMR" id="P66663"/>
<dbReference type="KEGG" id="sam:MW0448"/>
<dbReference type="HOGENOM" id="CLU_041220_0_0_9"/>
<dbReference type="GO" id="GO:0005829">
    <property type="term" value="C:cytosol"/>
    <property type="evidence" value="ECO:0007669"/>
    <property type="project" value="TreeGrafter"/>
</dbReference>
<dbReference type="GO" id="GO:0052908">
    <property type="term" value="F:16S rRNA (adenine(1518)-N(6)/adenine(1519)-N(6))-dimethyltransferase activity"/>
    <property type="evidence" value="ECO:0007669"/>
    <property type="project" value="UniProtKB-EC"/>
</dbReference>
<dbReference type="GO" id="GO:0003723">
    <property type="term" value="F:RNA binding"/>
    <property type="evidence" value="ECO:0007669"/>
    <property type="project" value="UniProtKB-KW"/>
</dbReference>
<dbReference type="CDD" id="cd02440">
    <property type="entry name" value="AdoMet_MTases"/>
    <property type="match status" value="1"/>
</dbReference>
<dbReference type="FunFam" id="1.10.8.100:FF:000002">
    <property type="entry name" value="Ribosomal RNA small subunit methyltransferase A"/>
    <property type="match status" value="1"/>
</dbReference>
<dbReference type="FunFam" id="3.40.50.150:FF:000023">
    <property type="entry name" value="Ribosomal RNA small subunit methyltransferase A"/>
    <property type="match status" value="1"/>
</dbReference>
<dbReference type="Gene3D" id="1.10.8.100">
    <property type="entry name" value="Ribosomal RNA adenine dimethylase-like, domain 2"/>
    <property type="match status" value="1"/>
</dbReference>
<dbReference type="Gene3D" id="3.40.50.150">
    <property type="entry name" value="Vaccinia Virus protein VP39"/>
    <property type="match status" value="1"/>
</dbReference>
<dbReference type="HAMAP" id="MF_00607">
    <property type="entry name" value="16SrRNA_methyltr_A"/>
    <property type="match status" value="1"/>
</dbReference>
<dbReference type="InterPro" id="IPR001737">
    <property type="entry name" value="KsgA/Erm"/>
</dbReference>
<dbReference type="InterPro" id="IPR023165">
    <property type="entry name" value="rRNA_Ade_diMease-like_C"/>
</dbReference>
<dbReference type="InterPro" id="IPR020596">
    <property type="entry name" value="rRNA_Ade_Mease_Trfase_CS"/>
</dbReference>
<dbReference type="InterPro" id="IPR020598">
    <property type="entry name" value="rRNA_Ade_methylase_Trfase_N"/>
</dbReference>
<dbReference type="InterPro" id="IPR011530">
    <property type="entry name" value="rRNA_adenine_dimethylase"/>
</dbReference>
<dbReference type="InterPro" id="IPR029063">
    <property type="entry name" value="SAM-dependent_MTases_sf"/>
</dbReference>
<dbReference type="NCBIfam" id="TIGR00755">
    <property type="entry name" value="ksgA"/>
    <property type="match status" value="1"/>
</dbReference>
<dbReference type="PANTHER" id="PTHR11727">
    <property type="entry name" value="DIMETHYLADENOSINE TRANSFERASE"/>
    <property type="match status" value="1"/>
</dbReference>
<dbReference type="PANTHER" id="PTHR11727:SF7">
    <property type="entry name" value="DIMETHYLADENOSINE TRANSFERASE-RELATED"/>
    <property type="match status" value="1"/>
</dbReference>
<dbReference type="Pfam" id="PF00398">
    <property type="entry name" value="RrnaAD"/>
    <property type="match status" value="1"/>
</dbReference>
<dbReference type="SMART" id="SM00650">
    <property type="entry name" value="rADc"/>
    <property type="match status" value="1"/>
</dbReference>
<dbReference type="SUPFAM" id="SSF53335">
    <property type="entry name" value="S-adenosyl-L-methionine-dependent methyltransferases"/>
    <property type="match status" value="1"/>
</dbReference>
<dbReference type="PROSITE" id="PS01131">
    <property type="entry name" value="RRNA_A_DIMETH"/>
    <property type="match status" value="1"/>
</dbReference>
<dbReference type="PROSITE" id="PS51689">
    <property type="entry name" value="SAM_RNA_A_N6_MT"/>
    <property type="match status" value="1"/>
</dbReference>